<comment type="function">
    <text evidence="1">Part of the ABC transporter complex CcmAB involved in the biogenesis of c-type cytochromes; once thought to export heme, this seems not to be the case, but its exact role is uncertain. Responsible for energy coupling to the transport system.</text>
</comment>
<comment type="catalytic activity">
    <reaction evidence="1">
        <text>heme b(in) + ATP + H2O = heme b(out) + ADP + phosphate + H(+)</text>
        <dbReference type="Rhea" id="RHEA:19261"/>
        <dbReference type="ChEBI" id="CHEBI:15377"/>
        <dbReference type="ChEBI" id="CHEBI:15378"/>
        <dbReference type="ChEBI" id="CHEBI:30616"/>
        <dbReference type="ChEBI" id="CHEBI:43474"/>
        <dbReference type="ChEBI" id="CHEBI:60344"/>
        <dbReference type="ChEBI" id="CHEBI:456216"/>
        <dbReference type="EC" id="7.6.2.5"/>
    </reaction>
</comment>
<comment type="subunit">
    <text evidence="1">The complex is composed of two ATP-binding proteins (CcmA) and two transmembrane proteins (CcmB).</text>
</comment>
<comment type="subcellular location">
    <subcellularLocation>
        <location evidence="1">Cell inner membrane</location>
        <topology evidence="1">Peripheral membrane protein</topology>
    </subcellularLocation>
</comment>
<comment type="similarity">
    <text evidence="1">Belongs to the ABC transporter superfamily. CcmA exporter (TC 3.A.1.107) family.</text>
</comment>
<protein>
    <recommendedName>
        <fullName evidence="1">Cytochrome c biogenesis ATP-binding export protein CcmA</fullName>
        <ecNumber evidence="1">7.6.2.5</ecNumber>
    </recommendedName>
    <alternativeName>
        <fullName evidence="1">Heme exporter protein A</fullName>
    </alternativeName>
</protein>
<proteinExistence type="inferred from homology"/>
<reference key="1">
    <citation type="journal article" date="2002" name="Infect. Immun.">
        <title>The cytochrome c maturation locus of Legionella pneumophila promotes iron assimilation and intracellular infection and contains a strain-specific insertion sequence element.</title>
        <authorList>
            <person name="Viswanathan V.K."/>
            <person name="Kurtz S."/>
            <person name="Pedersen L.L."/>
            <person name="Abu Kwaik Y."/>
            <person name="Krcmarik K."/>
            <person name="Mody S."/>
            <person name="Cianciotto N.P."/>
        </authorList>
    </citation>
    <scope>NUCLEOTIDE SEQUENCE [GENOMIC DNA]</scope>
    <source>
        <strain>130b / Wadsworth / Serogroup 1</strain>
    </source>
</reference>
<keyword id="KW-0067">ATP-binding</keyword>
<keyword id="KW-0997">Cell inner membrane</keyword>
<keyword id="KW-1003">Cell membrane</keyword>
<keyword id="KW-0201">Cytochrome c-type biogenesis</keyword>
<keyword id="KW-0472">Membrane</keyword>
<keyword id="KW-0547">Nucleotide-binding</keyword>
<keyword id="KW-1278">Translocase</keyword>
<keyword id="KW-0813">Transport</keyword>
<dbReference type="EC" id="7.6.2.5" evidence="1"/>
<dbReference type="EMBL" id="AF386079">
    <property type="protein sequence ID" value="AAM00391.1"/>
    <property type="molecule type" value="Genomic_DNA"/>
</dbReference>
<dbReference type="RefSeq" id="WP_027225196.1">
    <property type="nucleotide sequence ID" value="NZ_UGOS01000001.1"/>
</dbReference>
<dbReference type="SMR" id="Q8RPP4"/>
<dbReference type="STRING" id="91892.BIZ52_04575"/>
<dbReference type="eggNOG" id="COG4133">
    <property type="taxonomic scope" value="Bacteria"/>
</dbReference>
<dbReference type="GO" id="GO:0005886">
    <property type="term" value="C:plasma membrane"/>
    <property type="evidence" value="ECO:0007669"/>
    <property type="project" value="UniProtKB-SubCell"/>
</dbReference>
<dbReference type="GO" id="GO:0015439">
    <property type="term" value="F:ABC-type heme transporter activity"/>
    <property type="evidence" value="ECO:0007669"/>
    <property type="project" value="UniProtKB-EC"/>
</dbReference>
<dbReference type="GO" id="GO:0005524">
    <property type="term" value="F:ATP binding"/>
    <property type="evidence" value="ECO:0007669"/>
    <property type="project" value="UniProtKB-KW"/>
</dbReference>
<dbReference type="GO" id="GO:0016887">
    <property type="term" value="F:ATP hydrolysis activity"/>
    <property type="evidence" value="ECO:0007669"/>
    <property type="project" value="InterPro"/>
</dbReference>
<dbReference type="GO" id="GO:0017004">
    <property type="term" value="P:cytochrome complex assembly"/>
    <property type="evidence" value="ECO:0007669"/>
    <property type="project" value="UniProtKB-KW"/>
</dbReference>
<dbReference type="Gene3D" id="3.40.50.300">
    <property type="entry name" value="P-loop containing nucleotide triphosphate hydrolases"/>
    <property type="match status" value="1"/>
</dbReference>
<dbReference type="InterPro" id="IPR003593">
    <property type="entry name" value="AAA+_ATPase"/>
</dbReference>
<dbReference type="InterPro" id="IPR003439">
    <property type="entry name" value="ABC_transporter-like_ATP-bd"/>
</dbReference>
<dbReference type="InterPro" id="IPR005895">
    <property type="entry name" value="ABC_transptr_haem_export_CcmA"/>
</dbReference>
<dbReference type="InterPro" id="IPR027417">
    <property type="entry name" value="P-loop_NTPase"/>
</dbReference>
<dbReference type="NCBIfam" id="TIGR01189">
    <property type="entry name" value="ccmA"/>
    <property type="match status" value="1"/>
</dbReference>
<dbReference type="NCBIfam" id="NF010062">
    <property type="entry name" value="PRK13540.1"/>
    <property type="match status" value="1"/>
</dbReference>
<dbReference type="PANTHER" id="PTHR43499">
    <property type="entry name" value="ABC TRANSPORTER I FAMILY MEMBER 1"/>
    <property type="match status" value="1"/>
</dbReference>
<dbReference type="PANTHER" id="PTHR43499:SF1">
    <property type="entry name" value="ABC TRANSPORTER I FAMILY MEMBER 1"/>
    <property type="match status" value="1"/>
</dbReference>
<dbReference type="Pfam" id="PF00005">
    <property type="entry name" value="ABC_tran"/>
    <property type="match status" value="1"/>
</dbReference>
<dbReference type="SMART" id="SM00382">
    <property type="entry name" value="AAA"/>
    <property type="match status" value="1"/>
</dbReference>
<dbReference type="SUPFAM" id="SSF52540">
    <property type="entry name" value="P-loop containing nucleoside triphosphate hydrolases"/>
    <property type="match status" value="1"/>
</dbReference>
<dbReference type="PROSITE" id="PS50893">
    <property type="entry name" value="ABC_TRANSPORTER_2"/>
    <property type="match status" value="1"/>
</dbReference>
<dbReference type="PROSITE" id="PS51243">
    <property type="entry name" value="CCMA"/>
    <property type="match status" value="1"/>
</dbReference>
<organism>
    <name type="scientific">Legionella pneumophila</name>
    <dbReference type="NCBI Taxonomy" id="446"/>
    <lineage>
        <taxon>Bacteria</taxon>
        <taxon>Pseudomonadati</taxon>
        <taxon>Pseudomonadota</taxon>
        <taxon>Gammaproteobacteria</taxon>
        <taxon>Legionellales</taxon>
        <taxon>Legionellaceae</taxon>
        <taxon>Legionella</taxon>
    </lineage>
</organism>
<evidence type="ECO:0000255" key="1">
    <source>
        <dbReference type="HAMAP-Rule" id="MF_01707"/>
    </source>
</evidence>
<feature type="chain" id="PRO_0000092187" description="Cytochrome c biogenesis ATP-binding export protein CcmA">
    <location>
        <begin position="1"/>
        <end position="200"/>
    </location>
</feature>
<feature type="domain" description="ABC transporter" evidence="1">
    <location>
        <begin position="2"/>
        <end position="200"/>
    </location>
</feature>
<feature type="binding site" evidence="1">
    <location>
        <begin position="34"/>
        <end position="41"/>
    </location>
    <ligand>
        <name>ATP</name>
        <dbReference type="ChEBI" id="CHEBI:30616"/>
    </ligand>
</feature>
<accession>Q8RPP4</accession>
<gene>
    <name evidence="1" type="primary">ccmA</name>
</gene>
<name>CCMA_LEGPN</name>
<sequence length="200" mass="22640">MLDVIELDFDYHDQPLLQQISFHLPAGGLLHLKGSNGAGKTTLLKLIAGLLNPEKGEILFERRSIKKDLCTYQKQLCFVGHRSGINPYLTLRENCLYDIHFSPGAVGITELCRLFSLEHLIDYPCGLLSSGQKRQVALLRLWMSKAKLWLLDEPLVALDELSLLTIIRKIQEHRAKGGAVLLTSHQDLPLNKADYEEYHL</sequence>